<comment type="function">
    <text evidence="1">Required for normal synthesis of the cell wall.</text>
</comment>
<comment type="catalytic activity">
    <reaction>
        <text>Random hydrolysis of (1-&gt;6)-alpha-D-mannosidic linkages in unbranched (1-&gt;6)-mannans.</text>
        <dbReference type="EC" id="3.2.1.101"/>
    </reaction>
</comment>
<comment type="subcellular location">
    <subcellularLocation>
        <location evidence="1">Secreted</location>
        <location evidence="1">Cell wall</location>
    </subcellularLocation>
    <subcellularLocation>
        <location evidence="1">Cell membrane</location>
        <topology evidence="1">Lipid-anchor</topology>
        <topology evidence="1">GPI-anchor</topology>
    </subcellularLocation>
</comment>
<comment type="similarity">
    <text evidence="4">Belongs to the glycosyl hydrolase 76 family.</text>
</comment>
<name>DCW1_CANGA</name>
<feature type="signal peptide" evidence="2">
    <location>
        <begin position="1"/>
        <end position="18"/>
    </location>
</feature>
<feature type="chain" id="PRO_0000012123" description="Mannan endo-1,6-alpha-mannosidase DCW1">
    <location>
        <begin position="19"/>
        <end position="422"/>
    </location>
</feature>
<feature type="propeptide" id="PRO_0000012124" description="Removed in mature form" evidence="2">
    <location>
        <begin position="423"/>
        <end position="446"/>
    </location>
</feature>
<feature type="region of interest" description="Disordered" evidence="3">
    <location>
        <begin position="389"/>
        <end position="408"/>
    </location>
</feature>
<feature type="lipid moiety-binding region" description="GPI-anchor amidated serine" evidence="2">
    <location>
        <position position="422"/>
    </location>
</feature>
<feature type="glycosylation site" description="N-linked (GlcNAc...) asparagine" evidence="2">
    <location>
        <position position="31"/>
    </location>
</feature>
<feature type="glycosylation site" description="N-linked (GlcNAc...) asparagine" evidence="2">
    <location>
        <position position="81"/>
    </location>
</feature>
<feature type="glycosylation site" description="N-linked (GlcNAc...) asparagine" evidence="2">
    <location>
        <position position="106"/>
    </location>
</feature>
<feature type="glycosylation site" description="N-linked (GlcNAc...) asparagine" evidence="2">
    <location>
        <position position="200"/>
    </location>
</feature>
<feature type="glycosylation site" description="N-linked (GlcNAc...) asparagine" evidence="2">
    <location>
        <position position="222"/>
    </location>
</feature>
<feature type="glycosylation site" description="N-linked (GlcNAc...) asparagine" evidence="2">
    <location>
        <position position="237"/>
    </location>
</feature>
<feature type="glycosylation site" description="N-linked (GlcNAc...) asparagine" evidence="2">
    <location>
        <position position="262"/>
    </location>
</feature>
<feature type="glycosylation site" description="N-linked (GlcNAc...) asparagine" evidence="2">
    <location>
        <position position="278"/>
    </location>
</feature>
<feature type="glycosylation site" description="N-linked (GlcNAc...) asparagine" evidence="2">
    <location>
        <position position="285"/>
    </location>
</feature>
<feature type="glycosylation site" description="N-linked (GlcNAc...) asparagine" evidence="2">
    <location>
        <position position="334"/>
    </location>
</feature>
<feature type="glycosylation site" description="N-linked (GlcNAc...) asparagine" evidence="2">
    <location>
        <position position="391"/>
    </location>
</feature>
<feature type="glycosylation site" description="N-linked (GlcNAc...) asparagine" evidence="2">
    <location>
        <position position="397"/>
    </location>
</feature>
<organism>
    <name type="scientific">Candida glabrata (strain ATCC 2001 / BCRC 20586 / JCM 3761 / NBRC 0622 / NRRL Y-65 / CBS 138)</name>
    <name type="common">Yeast</name>
    <name type="synonym">Nakaseomyces glabratus</name>
    <dbReference type="NCBI Taxonomy" id="284593"/>
    <lineage>
        <taxon>Eukaryota</taxon>
        <taxon>Fungi</taxon>
        <taxon>Dikarya</taxon>
        <taxon>Ascomycota</taxon>
        <taxon>Saccharomycotina</taxon>
        <taxon>Saccharomycetes</taxon>
        <taxon>Saccharomycetales</taxon>
        <taxon>Saccharomycetaceae</taxon>
        <taxon>Nakaseomyces</taxon>
    </lineage>
</organism>
<dbReference type="EC" id="3.2.1.101"/>
<dbReference type="EMBL" id="CR380958">
    <property type="protein sequence ID" value="CAG61815.1"/>
    <property type="molecule type" value="Genomic_DNA"/>
</dbReference>
<dbReference type="RefSeq" id="XP_448845.1">
    <property type="nucleotide sequence ID" value="XM_448845.1"/>
</dbReference>
<dbReference type="SMR" id="Q6FLP9"/>
<dbReference type="FunCoup" id="Q6FLP9">
    <property type="interactions" value="15"/>
</dbReference>
<dbReference type="STRING" id="284593.Q6FLP9"/>
<dbReference type="CAZy" id="GH76">
    <property type="family name" value="Glycoside Hydrolase Family 76"/>
</dbReference>
<dbReference type="GlyCosmos" id="Q6FLP9">
    <property type="glycosylation" value="12 sites, No reported glycans"/>
</dbReference>
<dbReference type="EnsemblFungi" id="CAGL0L01727g-T">
    <property type="protein sequence ID" value="CAGL0L01727g-T-p1"/>
    <property type="gene ID" value="CAGL0L01727g"/>
</dbReference>
<dbReference type="KEGG" id="cgr:2890890"/>
<dbReference type="CGD" id="CAL0136136">
    <property type="gene designation" value="DCW1"/>
</dbReference>
<dbReference type="VEuPathDB" id="FungiDB:CAGL0L01727g"/>
<dbReference type="eggNOG" id="ENOG502QSWP">
    <property type="taxonomic scope" value="Eukaryota"/>
</dbReference>
<dbReference type="HOGENOM" id="CLU_025694_1_2_1"/>
<dbReference type="InParanoid" id="Q6FLP9"/>
<dbReference type="OMA" id="CERNGLC"/>
<dbReference type="Proteomes" id="UP000002428">
    <property type="component" value="Chromosome L"/>
</dbReference>
<dbReference type="GO" id="GO:0005576">
    <property type="term" value="C:extracellular region"/>
    <property type="evidence" value="ECO:0000314"/>
    <property type="project" value="CGD"/>
</dbReference>
<dbReference type="GO" id="GO:0005886">
    <property type="term" value="C:plasma membrane"/>
    <property type="evidence" value="ECO:0007669"/>
    <property type="project" value="UniProtKB-SubCell"/>
</dbReference>
<dbReference type="GO" id="GO:0098552">
    <property type="term" value="C:side of membrane"/>
    <property type="evidence" value="ECO:0007669"/>
    <property type="project" value="UniProtKB-KW"/>
</dbReference>
<dbReference type="GO" id="GO:0008496">
    <property type="term" value="F:mannan endo-1,6-alpha-mannosidase activity"/>
    <property type="evidence" value="ECO:0007669"/>
    <property type="project" value="UniProtKB-EC"/>
</dbReference>
<dbReference type="GO" id="GO:0007117">
    <property type="term" value="P:budding cell bud growth"/>
    <property type="evidence" value="ECO:0007669"/>
    <property type="project" value="EnsemblFungi"/>
</dbReference>
<dbReference type="GO" id="GO:0016052">
    <property type="term" value="P:carbohydrate catabolic process"/>
    <property type="evidence" value="ECO:0007669"/>
    <property type="project" value="InterPro"/>
</dbReference>
<dbReference type="GO" id="GO:0071555">
    <property type="term" value="P:cell wall organization"/>
    <property type="evidence" value="ECO:0007669"/>
    <property type="project" value="UniProtKB-KW"/>
</dbReference>
<dbReference type="GO" id="GO:0009272">
    <property type="term" value="P:fungal-type cell wall biogenesis"/>
    <property type="evidence" value="ECO:0007669"/>
    <property type="project" value="EnsemblFungi"/>
</dbReference>
<dbReference type="FunFam" id="1.50.10.20:FF:000006">
    <property type="entry name" value="Mannan endo-1,6-alpha-mannosidase"/>
    <property type="match status" value="1"/>
</dbReference>
<dbReference type="Gene3D" id="1.50.10.20">
    <property type="match status" value="1"/>
</dbReference>
<dbReference type="InterPro" id="IPR008928">
    <property type="entry name" value="6-hairpin_glycosidase_sf"/>
</dbReference>
<dbReference type="InterPro" id="IPR005198">
    <property type="entry name" value="Glyco_hydro_76"/>
</dbReference>
<dbReference type="InterPro" id="IPR014480">
    <property type="entry name" value="Mannan-1_6-alpha_mannosidase"/>
</dbReference>
<dbReference type="PANTHER" id="PTHR12145">
    <property type="entry name" value="MANNAN ENDO-1,6-ALPHA-MANNOSIDASE DCW1"/>
    <property type="match status" value="1"/>
</dbReference>
<dbReference type="PANTHER" id="PTHR12145:SF36">
    <property type="entry name" value="MANNAN ENDO-1,6-ALPHA-MANNOSIDASE DCW1"/>
    <property type="match status" value="1"/>
</dbReference>
<dbReference type="Pfam" id="PF03663">
    <property type="entry name" value="Glyco_hydro_76"/>
    <property type="match status" value="1"/>
</dbReference>
<dbReference type="PIRSF" id="PIRSF016302">
    <property type="entry name" value="Man_a_manosd"/>
    <property type="match status" value="1"/>
</dbReference>
<dbReference type="SUPFAM" id="SSF48208">
    <property type="entry name" value="Six-hairpin glycosidases"/>
    <property type="match status" value="1"/>
</dbReference>
<sequence length="446" mass="49699">MRLVTLLSGLVSLVSVFGLELDLDDYASLQNATALVAYGLMDYYTGDQYGKTVGMFSDPYYWWQAGGAWGCMLDYWYFMQNDTYNDKIMAALLHQTGDNNDYVPLNQSTTEGNDDQAFWGIAVMQAAERKFPNPPDDKPQWLYLTQAVFNTMALRWDSETCGGGLRWQIFVWNSGYDYKNTVSNGALFHIAARLARYTGNQSYVDWAERVYDWMEDVHLIDNGTYRYVYDGVSINDNCTTVTKYQWTYNQGLMLSGSAYLFNMTGSDLWHERTHAFLNASRVFFNNSILYEAACQGPNTCNTDQRSFKAYFARFLGSTAELVPETRQQIMTWLNTSALAAAKSCSGGTDGHTCGLNWFRDDWDGMYGLGEQMAALEVMVNTQALKRAPPYNATNGGNSTGDGAAGTKPHPTNLAPLHITGGSRAGAGIITAIIGISIIACALWLVY</sequence>
<proteinExistence type="inferred from homology"/>
<gene>
    <name type="primary">DCW1</name>
    <name type="ordered locus">CAGL0L01727g</name>
</gene>
<reference key="1">
    <citation type="journal article" date="2004" name="Nature">
        <title>Genome evolution in yeasts.</title>
        <authorList>
            <person name="Dujon B."/>
            <person name="Sherman D."/>
            <person name="Fischer G."/>
            <person name="Durrens P."/>
            <person name="Casaregola S."/>
            <person name="Lafontaine I."/>
            <person name="de Montigny J."/>
            <person name="Marck C."/>
            <person name="Neuveglise C."/>
            <person name="Talla E."/>
            <person name="Goffard N."/>
            <person name="Frangeul L."/>
            <person name="Aigle M."/>
            <person name="Anthouard V."/>
            <person name="Babour A."/>
            <person name="Barbe V."/>
            <person name="Barnay S."/>
            <person name="Blanchin S."/>
            <person name="Beckerich J.-M."/>
            <person name="Beyne E."/>
            <person name="Bleykasten C."/>
            <person name="Boisrame A."/>
            <person name="Boyer J."/>
            <person name="Cattolico L."/>
            <person name="Confanioleri F."/>
            <person name="de Daruvar A."/>
            <person name="Despons L."/>
            <person name="Fabre E."/>
            <person name="Fairhead C."/>
            <person name="Ferry-Dumazet H."/>
            <person name="Groppi A."/>
            <person name="Hantraye F."/>
            <person name="Hennequin C."/>
            <person name="Jauniaux N."/>
            <person name="Joyet P."/>
            <person name="Kachouri R."/>
            <person name="Kerrest A."/>
            <person name="Koszul R."/>
            <person name="Lemaire M."/>
            <person name="Lesur I."/>
            <person name="Ma L."/>
            <person name="Muller H."/>
            <person name="Nicaud J.-M."/>
            <person name="Nikolski M."/>
            <person name="Oztas S."/>
            <person name="Ozier-Kalogeropoulos O."/>
            <person name="Pellenz S."/>
            <person name="Potier S."/>
            <person name="Richard G.-F."/>
            <person name="Straub M.-L."/>
            <person name="Suleau A."/>
            <person name="Swennen D."/>
            <person name="Tekaia F."/>
            <person name="Wesolowski-Louvel M."/>
            <person name="Westhof E."/>
            <person name="Wirth B."/>
            <person name="Zeniou-Meyer M."/>
            <person name="Zivanovic Y."/>
            <person name="Bolotin-Fukuhara M."/>
            <person name="Thierry A."/>
            <person name="Bouchier C."/>
            <person name="Caudron B."/>
            <person name="Scarpelli C."/>
            <person name="Gaillardin C."/>
            <person name="Weissenbach J."/>
            <person name="Wincker P."/>
            <person name="Souciet J.-L."/>
        </authorList>
    </citation>
    <scope>NUCLEOTIDE SEQUENCE [LARGE SCALE GENOMIC DNA]</scope>
    <source>
        <strain>ATCC 2001 / BCRC 20586 / JCM 3761 / NBRC 0622 / NRRL Y-65 / CBS 138</strain>
    </source>
</reference>
<accession>Q6FLP9</accession>
<protein>
    <recommendedName>
        <fullName>Mannan endo-1,6-alpha-mannosidase DCW1</fullName>
        <ecNumber>3.2.1.101</ecNumber>
    </recommendedName>
    <alternativeName>
        <fullName>Defective cell wall 1</fullName>
    </alternativeName>
    <alternativeName>
        <fullName>Endo-alpha-1-&gt;6-D-mannanase DCW1</fullName>
    </alternativeName>
</protein>
<evidence type="ECO:0000250" key="1"/>
<evidence type="ECO:0000255" key="2"/>
<evidence type="ECO:0000256" key="3">
    <source>
        <dbReference type="SAM" id="MobiDB-lite"/>
    </source>
</evidence>
<evidence type="ECO:0000305" key="4"/>
<keyword id="KW-1003">Cell membrane</keyword>
<keyword id="KW-0134">Cell wall</keyword>
<keyword id="KW-0961">Cell wall biogenesis/degradation</keyword>
<keyword id="KW-0325">Glycoprotein</keyword>
<keyword id="KW-0326">Glycosidase</keyword>
<keyword id="KW-0336">GPI-anchor</keyword>
<keyword id="KW-0378">Hydrolase</keyword>
<keyword id="KW-0449">Lipoprotein</keyword>
<keyword id="KW-0472">Membrane</keyword>
<keyword id="KW-1185">Reference proteome</keyword>
<keyword id="KW-0964">Secreted</keyword>
<keyword id="KW-0732">Signal</keyword>